<sequence>MDWQTLLTRERLGKPVHSNDELGRSAFHKDHDRIIFSGAFRRLGRKTQVHPVSSNDHIHTRLTHSLEVACVGRSLGMRVGEILREELPEWCDPSDLGVIVQSACLAHDIGNPPFGHSGEDAIRNWFQQAAGRGWLDEMSDAERSDFLHFEGNAQGFRVLTQLEYHQFDGGTRLTYATLGTYLKYPWTSRHAEALGYKKHKFGCYQSELPLLEQITHKLGMPQLDDERWARHPLVYLMEAADDICYGLIDLEDGLEMELLEYSEVEALLLGLVGDDLPDTYRQLGPRDSRRRKLAILRGKAIEHLTNAAARAFVDQQQALLAGQLAGDLVEHMHGPAKLCVQRAKAIAREKIFQDKRKTLHEIGAYTTLEILLNAFCGAALEQYGGHTPSFKNRRILDLLGRNAPDPQWPLYRAFLQVIDFIAGMTDSYATEMAREMTGRSSPS</sequence>
<dbReference type="EMBL" id="CP000438">
    <property type="protein sequence ID" value="ABJ12280.1"/>
    <property type="molecule type" value="Genomic_DNA"/>
</dbReference>
<dbReference type="RefSeq" id="WP_003091265.1">
    <property type="nucleotide sequence ID" value="NZ_CP034244.1"/>
</dbReference>
<dbReference type="SMR" id="Q02PK7"/>
<dbReference type="KEGG" id="pau:PA14_24730"/>
<dbReference type="PseudoCAP" id="PA14_24730"/>
<dbReference type="HOGENOM" id="CLU_028163_2_0_6"/>
<dbReference type="BioCyc" id="PAER208963:G1G74-2062-MONOMER"/>
<dbReference type="Proteomes" id="UP000000653">
    <property type="component" value="Chromosome"/>
</dbReference>
<dbReference type="GO" id="GO:0008832">
    <property type="term" value="F:dGTPase activity"/>
    <property type="evidence" value="ECO:0007669"/>
    <property type="project" value="TreeGrafter"/>
</dbReference>
<dbReference type="GO" id="GO:0006203">
    <property type="term" value="P:dGTP catabolic process"/>
    <property type="evidence" value="ECO:0007669"/>
    <property type="project" value="TreeGrafter"/>
</dbReference>
<dbReference type="CDD" id="cd00077">
    <property type="entry name" value="HDc"/>
    <property type="match status" value="1"/>
</dbReference>
<dbReference type="FunFam" id="1.10.3410.10:FF:000002">
    <property type="entry name" value="Deoxyguanosinetriphosphate triphosphohydrolase-like protein"/>
    <property type="match status" value="1"/>
</dbReference>
<dbReference type="Gene3D" id="1.10.3550.10">
    <property type="entry name" value="eoxyguanosinetriphosphate triphosphohydrolase domain-like"/>
    <property type="match status" value="1"/>
</dbReference>
<dbReference type="Gene3D" id="1.10.3210.10">
    <property type="entry name" value="Hypothetical protein af1432"/>
    <property type="match status" value="1"/>
</dbReference>
<dbReference type="Gene3D" id="1.10.3410.10">
    <property type="entry name" value="putative deoxyguanosinetriphosphate triphosphohydrolase like domain"/>
    <property type="match status" value="1"/>
</dbReference>
<dbReference type="HAMAP" id="MF_01213">
    <property type="entry name" value="dGTPase_type3"/>
    <property type="match status" value="1"/>
</dbReference>
<dbReference type="InterPro" id="IPR023293">
    <property type="entry name" value="dGTP_triP_hydro_central_sf"/>
</dbReference>
<dbReference type="InterPro" id="IPR027432">
    <property type="entry name" value="dGTP_triphosphohydrolase_C"/>
</dbReference>
<dbReference type="InterPro" id="IPR006261">
    <property type="entry name" value="dGTPase"/>
</dbReference>
<dbReference type="InterPro" id="IPR050135">
    <property type="entry name" value="dGTPase-like"/>
</dbReference>
<dbReference type="InterPro" id="IPR023024">
    <property type="entry name" value="dNTPase_3"/>
</dbReference>
<dbReference type="InterPro" id="IPR003607">
    <property type="entry name" value="HD/PDEase_dom"/>
</dbReference>
<dbReference type="InterPro" id="IPR006674">
    <property type="entry name" value="HD_domain"/>
</dbReference>
<dbReference type="NCBIfam" id="TIGR01353">
    <property type="entry name" value="dGTP_triPase"/>
    <property type="match status" value="1"/>
</dbReference>
<dbReference type="NCBIfam" id="NF002205">
    <property type="entry name" value="PRK01096.1"/>
    <property type="match status" value="1"/>
</dbReference>
<dbReference type="PANTHER" id="PTHR11373:SF40">
    <property type="entry name" value="DEOXYGUANOSINETRIPHOSPHATE TRIPHOSPHOHYDROLASE-LIKE PROTEIN 2"/>
    <property type="match status" value="1"/>
</dbReference>
<dbReference type="PANTHER" id="PTHR11373">
    <property type="entry name" value="DEOXYNUCLEOSIDE TRIPHOSPHATE TRIPHOSPHOHYDROLASE"/>
    <property type="match status" value="1"/>
</dbReference>
<dbReference type="Pfam" id="PF01966">
    <property type="entry name" value="HD"/>
    <property type="match status" value="1"/>
</dbReference>
<dbReference type="SMART" id="SM00471">
    <property type="entry name" value="HDc"/>
    <property type="match status" value="1"/>
</dbReference>
<dbReference type="SUPFAM" id="SSF109604">
    <property type="entry name" value="HD-domain/PDEase-like"/>
    <property type="match status" value="1"/>
</dbReference>
<dbReference type="PROSITE" id="PS51831">
    <property type="entry name" value="HD"/>
    <property type="match status" value="1"/>
</dbReference>
<reference key="1">
    <citation type="journal article" date="2006" name="Genome Biol.">
        <title>Genomic analysis reveals that Pseudomonas aeruginosa virulence is combinatorial.</title>
        <authorList>
            <person name="Lee D.G."/>
            <person name="Urbach J.M."/>
            <person name="Wu G."/>
            <person name="Liberati N.T."/>
            <person name="Feinbaum R.L."/>
            <person name="Miyata S."/>
            <person name="Diggins L.T."/>
            <person name="He J."/>
            <person name="Saucier M."/>
            <person name="Deziel E."/>
            <person name="Friedman L."/>
            <person name="Li L."/>
            <person name="Grills G."/>
            <person name="Montgomery K."/>
            <person name="Kucherlapati R."/>
            <person name="Rahme L.G."/>
            <person name="Ausubel F.M."/>
        </authorList>
    </citation>
    <scope>NUCLEOTIDE SEQUENCE [LARGE SCALE GENOMIC DNA]</scope>
    <source>
        <strain>UCBPP-PA14</strain>
    </source>
</reference>
<evidence type="ECO:0000255" key="1">
    <source>
        <dbReference type="HAMAP-Rule" id="MF_01213"/>
    </source>
</evidence>
<evidence type="ECO:0000255" key="2">
    <source>
        <dbReference type="PROSITE-ProRule" id="PRU01175"/>
    </source>
</evidence>
<protein>
    <recommendedName>
        <fullName evidence="1">Deoxyguanosinetriphosphate triphosphohydrolase-like protein</fullName>
    </recommendedName>
</protein>
<organism>
    <name type="scientific">Pseudomonas aeruginosa (strain UCBPP-PA14)</name>
    <dbReference type="NCBI Taxonomy" id="208963"/>
    <lineage>
        <taxon>Bacteria</taxon>
        <taxon>Pseudomonadati</taxon>
        <taxon>Pseudomonadota</taxon>
        <taxon>Gammaproteobacteria</taxon>
        <taxon>Pseudomonadales</taxon>
        <taxon>Pseudomonadaceae</taxon>
        <taxon>Pseudomonas</taxon>
    </lineage>
</organism>
<name>DGTL2_PSEAB</name>
<gene>
    <name type="ordered locus">PA14_24730</name>
</gene>
<feature type="chain" id="PRO_1000066447" description="Deoxyguanosinetriphosphate triphosphohydrolase-like protein">
    <location>
        <begin position="1"/>
        <end position="443"/>
    </location>
</feature>
<feature type="domain" description="HD" evidence="2">
    <location>
        <begin position="61"/>
        <end position="246"/>
    </location>
</feature>
<comment type="similarity">
    <text evidence="1">Belongs to the dGTPase family. Type 3 subfamily.</text>
</comment>
<accession>Q02PK7</accession>
<proteinExistence type="inferred from homology"/>
<keyword id="KW-0378">Hydrolase</keyword>